<accession>A1AM04</accession>
<sequence>MQQKQMNIELRSKTGKGISRKLRSADMVPGVVYGKGMDPMAVSINYRELQAAMAGEGGQNNLITLVGGGSLDQSMAIVADLQRDAVKGTYKHVDLHRVNMSEKLRVTVPVVLKGTAIGVKEGGLLDFAHHELHVECLPGNIPDHIEIDVTSLAVAHSIHVGEIALPEGVKVLDNPKTPVVSVLGRVKEEAEAAAEAAEA</sequence>
<gene>
    <name evidence="1" type="primary">rplY</name>
    <name evidence="1" type="synonym">ctc</name>
    <name type="ordered locus">Ppro_0744</name>
</gene>
<keyword id="KW-1185">Reference proteome</keyword>
<keyword id="KW-0687">Ribonucleoprotein</keyword>
<keyword id="KW-0689">Ribosomal protein</keyword>
<keyword id="KW-0694">RNA-binding</keyword>
<keyword id="KW-0699">rRNA-binding</keyword>
<feature type="chain" id="PRO_1000052914" description="Large ribosomal subunit protein bL25">
    <location>
        <begin position="1"/>
        <end position="199"/>
    </location>
</feature>
<reference key="1">
    <citation type="submission" date="2006-10" db="EMBL/GenBank/DDBJ databases">
        <title>Complete sequence of chromosome of Pelobacter propionicus DSM 2379.</title>
        <authorList>
            <consortium name="US DOE Joint Genome Institute"/>
            <person name="Copeland A."/>
            <person name="Lucas S."/>
            <person name="Lapidus A."/>
            <person name="Barry K."/>
            <person name="Detter J.C."/>
            <person name="Glavina del Rio T."/>
            <person name="Hammon N."/>
            <person name="Israni S."/>
            <person name="Dalin E."/>
            <person name="Tice H."/>
            <person name="Pitluck S."/>
            <person name="Saunders E."/>
            <person name="Brettin T."/>
            <person name="Bruce D."/>
            <person name="Han C."/>
            <person name="Tapia R."/>
            <person name="Schmutz J."/>
            <person name="Larimer F."/>
            <person name="Land M."/>
            <person name="Hauser L."/>
            <person name="Kyrpides N."/>
            <person name="Kim E."/>
            <person name="Lovley D."/>
            <person name="Richardson P."/>
        </authorList>
    </citation>
    <scope>NUCLEOTIDE SEQUENCE [LARGE SCALE GENOMIC DNA]</scope>
    <source>
        <strain>DSM 2379 / NBRC 103807 / OttBd1</strain>
    </source>
</reference>
<dbReference type="EMBL" id="CP000482">
    <property type="protein sequence ID" value="ABK98374.1"/>
    <property type="molecule type" value="Genomic_DNA"/>
</dbReference>
<dbReference type="RefSeq" id="WP_011734686.1">
    <property type="nucleotide sequence ID" value="NC_008609.1"/>
</dbReference>
<dbReference type="SMR" id="A1AM04"/>
<dbReference type="STRING" id="338966.Ppro_0744"/>
<dbReference type="KEGG" id="ppd:Ppro_0744"/>
<dbReference type="eggNOG" id="COG1825">
    <property type="taxonomic scope" value="Bacteria"/>
</dbReference>
<dbReference type="HOGENOM" id="CLU_075939_2_1_7"/>
<dbReference type="OrthoDB" id="9786489at2"/>
<dbReference type="Proteomes" id="UP000006732">
    <property type="component" value="Chromosome"/>
</dbReference>
<dbReference type="GO" id="GO:0022625">
    <property type="term" value="C:cytosolic large ribosomal subunit"/>
    <property type="evidence" value="ECO:0007669"/>
    <property type="project" value="TreeGrafter"/>
</dbReference>
<dbReference type="GO" id="GO:0008097">
    <property type="term" value="F:5S rRNA binding"/>
    <property type="evidence" value="ECO:0007669"/>
    <property type="project" value="InterPro"/>
</dbReference>
<dbReference type="GO" id="GO:0003735">
    <property type="term" value="F:structural constituent of ribosome"/>
    <property type="evidence" value="ECO:0007669"/>
    <property type="project" value="InterPro"/>
</dbReference>
<dbReference type="GO" id="GO:0006412">
    <property type="term" value="P:translation"/>
    <property type="evidence" value="ECO:0007669"/>
    <property type="project" value="UniProtKB-UniRule"/>
</dbReference>
<dbReference type="CDD" id="cd00495">
    <property type="entry name" value="Ribosomal_L25_TL5_CTC"/>
    <property type="match status" value="1"/>
</dbReference>
<dbReference type="Gene3D" id="2.170.120.20">
    <property type="entry name" value="Ribosomal protein L25, beta domain"/>
    <property type="match status" value="1"/>
</dbReference>
<dbReference type="Gene3D" id="2.40.240.10">
    <property type="entry name" value="Ribosomal Protein L25, Chain P"/>
    <property type="match status" value="1"/>
</dbReference>
<dbReference type="HAMAP" id="MF_01334">
    <property type="entry name" value="Ribosomal_bL25_CTC"/>
    <property type="match status" value="1"/>
</dbReference>
<dbReference type="InterPro" id="IPR020056">
    <property type="entry name" value="Rbsml_bL25/Gln-tRNA_synth_N"/>
</dbReference>
<dbReference type="InterPro" id="IPR011035">
    <property type="entry name" value="Ribosomal_bL25/Gln-tRNA_synth"/>
</dbReference>
<dbReference type="InterPro" id="IPR020057">
    <property type="entry name" value="Ribosomal_bL25_b-dom"/>
</dbReference>
<dbReference type="InterPro" id="IPR037121">
    <property type="entry name" value="Ribosomal_bL25_C"/>
</dbReference>
<dbReference type="InterPro" id="IPR001021">
    <property type="entry name" value="Ribosomal_bL25_long"/>
</dbReference>
<dbReference type="InterPro" id="IPR029751">
    <property type="entry name" value="Ribosomal_L25_dom"/>
</dbReference>
<dbReference type="InterPro" id="IPR020930">
    <property type="entry name" value="Ribosomal_uL5_bac-type"/>
</dbReference>
<dbReference type="NCBIfam" id="TIGR00731">
    <property type="entry name" value="bL25_bact_ctc"/>
    <property type="match status" value="1"/>
</dbReference>
<dbReference type="PANTHER" id="PTHR33284">
    <property type="entry name" value="RIBOSOMAL PROTEIN L25/GLN-TRNA SYNTHETASE, ANTI-CODON-BINDING DOMAIN-CONTAINING PROTEIN"/>
    <property type="match status" value="1"/>
</dbReference>
<dbReference type="PANTHER" id="PTHR33284:SF1">
    <property type="entry name" value="RIBOSOMAL PROTEIN L25_GLN-TRNA SYNTHETASE, ANTI-CODON-BINDING DOMAIN-CONTAINING PROTEIN"/>
    <property type="match status" value="1"/>
</dbReference>
<dbReference type="Pfam" id="PF01386">
    <property type="entry name" value="Ribosomal_L25p"/>
    <property type="match status" value="1"/>
</dbReference>
<dbReference type="Pfam" id="PF14693">
    <property type="entry name" value="Ribosomal_TL5_C"/>
    <property type="match status" value="1"/>
</dbReference>
<dbReference type="SUPFAM" id="SSF50715">
    <property type="entry name" value="Ribosomal protein L25-like"/>
    <property type="match status" value="1"/>
</dbReference>
<protein>
    <recommendedName>
        <fullName evidence="1">Large ribosomal subunit protein bL25</fullName>
    </recommendedName>
    <alternativeName>
        <fullName evidence="2">50S ribosomal protein L25</fullName>
    </alternativeName>
    <alternativeName>
        <fullName evidence="1">General stress protein CTC</fullName>
    </alternativeName>
</protein>
<organism>
    <name type="scientific">Pelobacter propionicus (strain DSM 2379 / NBRC 103807 / OttBd1)</name>
    <dbReference type="NCBI Taxonomy" id="338966"/>
    <lineage>
        <taxon>Bacteria</taxon>
        <taxon>Pseudomonadati</taxon>
        <taxon>Thermodesulfobacteriota</taxon>
        <taxon>Desulfuromonadia</taxon>
        <taxon>Desulfuromonadales</taxon>
        <taxon>Desulfuromonadaceae</taxon>
        <taxon>Pelobacter</taxon>
    </lineage>
</organism>
<name>RL25_PELPD</name>
<comment type="function">
    <text evidence="1">This is one of the proteins that binds to the 5S RNA in the ribosome where it forms part of the central protuberance.</text>
</comment>
<comment type="subunit">
    <text evidence="1">Part of the 50S ribosomal subunit; part of the 5S rRNA/L5/L18/L25 subcomplex. Contacts the 5S rRNA. Binds to the 5S rRNA independently of L5 and L18.</text>
</comment>
<comment type="similarity">
    <text evidence="1">Belongs to the bacterial ribosomal protein bL25 family. CTC subfamily.</text>
</comment>
<proteinExistence type="inferred from homology"/>
<evidence type="ECO:0000255" key="1">
    <source>
        <dbReference type="HAMAP-Rule" id="MF_01334"/>
    </source>
</evidence>
<evidence type="ECO:0000305" key="2"/>